<sequence>MRRGVLPTAPPAYNDIAYPMSILPTRPSVIVNETKSDVLAVPGADVPSNSMRPVADDNIDHSSHTPSGVASAFILEATVNVISGTKVLMKQIPIWLPLGVADQKIYSFDSTTAAIMLASYTVTHFGKISNPLVRVNRLGPGIPDHPLRLLRLGNQAFLQEFVLPPVQLPQYFTFDLTALKLITQPLPAATWTDETPAGAVNALRPGLSLHPKLRPILLPGKTGKKGHASDLTSPDKIQTIMNAIPDLKIVPIDPTKNIVGIEVPELLVQRLTGKKPQPKNGQPIIPVLLPKYVGLDPISPGDLTMVITQDCDSCHSPASHPYHMDKQNSYQ</sequence>
<name>VP40_EBORR</name>
<proteinExistence type="inferred from homology"/>
<reference key="1">
    <citation type="journal article" date="2002" name="Virus Res.">
        <title>Molecular characterization of an isolate from the 1989/90 epizootic of Ebola virus Reston among macaques imported into the United States.</title>
        <authorList>
            <person name="Groseth A."/>
            <person name="Stroeher U."/>
            <person name="Theriault S."/>
            <person name="Feldmann H."/>
        </authorList>
    </citation>
    <scope>NUCLEOTIDE SEQUENCE [GENOMIC RNA]</scope>
</reference>
<reference key="2">
    <citation type="journal article" date="2005" name="Virology">
        <title>A reconstituted replication and transcription system for Ebola virus Reston and comparison with Ebola virus Zaire.</title>
        <authorList>
            <person name="Boehmann Y."/>
            <person name="Enterlein S."/>
            <person name="Randolf A."/>
            <person name="Muehlberger E.I."/>
        </authorList>
    </citation>
    <scope>NUCLEOTIDE SEQUENCE [GENOMIC RNA]</scope>
    <source>
        <strain>Isolate Pennsylvania-89</strain>
    </source>
</reference>
<organismHost>
    <name type="scientific">Epomops franqueti</name>
    <name type="common">Franquet's epauletted fruit bat</name>
    <name type="synonym">Epomophorus franqueti</name>
    <dbReference type="NCBI Taxonomy" id="77231"/>
</organismHost>
<organismHost>
    <name type="scientific">Homo sapiens</name>
    <name type="common">Human</name>
    <dbReference type="NCBI Taxonomy" id="9606"/>
</organismHost>
<organismHost>
    <name type="scientific">Myonycteris torquata</name>
    <name type="common">Little collared fruit bat</name>
    <dbReference type="NCBI Taxonomy" id="77243"/>
</organismHost>
<organismHost>
    <name type="scientific">Sus scrofa</name>
    <name type="common">Pig</name>
    <dbReference type="NCBI Taxonomy" id="9823"/>
</organismHost>
<dbReference type="EMBL" id="AF522874">
    <property type="protein sequence ID" value="AAN04450.1"/>
    <property type="molecule type" value="Genomic_RNA"/>
</dbReference>
<dbReference type="EMBL" id="AY769362">
    <property type="protein sequence ID" value="AAV48576.1"/>
    <property type="molecule type" value="Genomic_RNA"/>
</dbReference>
<dbReference type="RefSeq" id="NP_690582.1">
    <property type="nucleotide sequence ID" value="NC_004161.1"/>
</dbReference>
<dbReference type="SMR" id="Q8JPX9"/>
<dbReference type="GeneID" id="955192"/>
<dbReference type="KEGG" id="vg:955192"/>
<dbReference type="Proteomes" id="UP000007207">
    <property type="component" value="Segment"/>
</dbReference>
<dbReference type="Proteomes" id="UP000138664">
    <property type="component" value="Genome"/>
</dbReference>
<dbReference type="GO" id="GO:0033645">
    <property type="term" value="C:host cell endomembrane system"/>
    <property type="evidence" value="ECO:0007669"/>
    <property type="project" value="UniProtKB-SubCell"/>
</dbReference>
<dbReference type="GO" id="GO:0044185">
    <property type="term" value="C:host cell late endosome membrane"/>
    <property type="evidence" value="ECO:0007669"/>
    <property type="project" value="UniProtKB-SubCell"/>
</dbReference>
<dbReference type="GO" id="GO:0020002">
    <property type="term" value="C:host cell plasma membrane"/>
    <property type="evidence" value="ECO:0007669"/>
    <property type="project" value="UniProtKB-SubCell"/>
</dbReference>
<dbReference type="GO" id="GO:0016020">
    <property type="term" value="C:membrane"/>
    <property type="evidence" value="ECO:0007669"/>
    <property type="project" value="UniProtKB-KW"/>
</dbReference>
<dbReference type="GO" id="GO:1990904">
    <property type="term" value="C:ribonucleoprotein complex"/>
    <property type="evidence" value="ECO:0007669"/>
    <property type="project" value="UniProtKB-KW"/>
</dbReference>
<dbReference type="GO" id="GO:0055036">
    <property type="term" value="C:virion membrane"/>
    <property type="evidence" value="ECO:0007669"/>
    <property type="project" value="UniProtKB-SubCell"/>
</dbReference>
<dbReference type="GO" id="GO:0003723">
    <property type="term" value="F:RNA binding"/>
    <property type="evidence" value="ECO:0007669"/>
    <property type="project" value="UniProtKB-KW"/>
</dbReference>
<dbReference type="GO" id="GO:0039660">
    <property type="term" value="F:structural constituent of virion"/>
    <property type="evidence" value="ECO:0007669"/>
    <property type="project" value="UniProtKB-KW"/>
</dbReference>
<dbReference type="GO" id="GO:0052170">
    <property type="term" value="P:symbiont-mediated suppression of host innate immune response"/>
    <property type="evidence" value="ECO:0007669"/>
    <property type="project" value="UniProtKB-KW"/>
</dbReference>
<dbReference type="GO" id="GO:0039702">
    <property type="term" value="P:viral budding via host ESCRT complex"/>
    <property type="evidence" value="ECO:0007669"/>
    <property type="project" value="UniProtKB-KW"/>
</dbReference>
<dbReference type="Gene3D" id="2.60.510.10">
    <property type="entry name" value="EV matrix protein"/>
    <property type="match status" value="1"/>
</dbReference>
<dbReference type="Gene3D" id="2.70.20.20">
    <property type="entry name" value="Matrix protein VP40, N-terminal domain"/>
    <property type="match status" value="1"/>
</dbReference>
<dbReference type="InterPro" id="IPR008986">
    <property type="entry name" value="EV_matrix"/>
</dbReference>
<dbReference type="InterPro" id="IPR035092">
    <property type="entry name" value="EV_matrix_protein_C"/>
</dbReference>
<dbReference type="InterPro" id="IPR043079">
    <property type="entry name" value="EV_matrix_protein_N"/>
</dbReference>
<dbReference type="InterPro" id="IPR038057">
    <property type="entry name" value="EV_matrix_sf"/>
</dbReference>
<dbReference type="Pfam" id="PF07447">
    <property type="entry name" value="Matrix_Filo"/>
    <property type="match status" value="1"/>
</dbReference>
<dbReference type="PIRSF" id="PIRSF018327">
    <property type="entry name" value="VP40_FiloV"/>
    <property type="match status" value="1"/>
</dbReference>
<dbReference type="SUPFAM" id="SSF50012">
    <property type="entry name" value="EV matrix protein"/>
    <property type="match status" value="2"/>
</dbReference>
<comment type="function">
    <text evidence="3">Plays an essential role virus particle assembly and budding. Acts by interacting with viral ribonucleocapsid and host members of the ESCRT (endosomal sorting complex required for transport) system such as host VPS4, PDCD6IP/ALIX, NEDD4 or TGS101. The interaction with host E3 ubiquitin ligase SMURF2 also facilitates virus budding. May play a role in immune cell dysfunction by being packaged into exosomes that can decrease the viability of recipient cells (via RNAi suppression and exosome-bystander apoptosis).</text>
</comment>
<comment type="subunit">
    <text evidence="3">Homodimer. Homohexamer. Homooctamer. Exists as a dimer until it reorganizes at the plasma membrane into a hexameric form using phosphatidylinositol 4,5-bisphosphate (PI(4,5)P2). Hexamers are critical for budding. Octamers function in genome replication and RNA binding. Interacts with host TSG101. As a homohexamer, interacts with the WW domain 3 of host NEDD4. Interacts with the nucleoprotein/NP. Interacts (via YPx(n)L/I motif) with host PDCD6IP/ALIX; this interaction supports efficient egress of viral particles. Interacts with VP35. Interacts with host ITCH; this interaction is required for efficient egress. Interacts (via PPXY motif) with host SMURF2 (via WW domains); the interaction positively regulates virus budding.</text>
</comment>
<comment type="subcellular location">
    <subcellularLocation>
        <location evidence="2">Virion membrane</location>
        <topology evidence="2">Peripheral membrane protein</topology>
    </subcellularLocation>
    <subcellularLocation>
        <location evidence="2">Host late endosome membrane</location>
        <topology evidence="2">Peripheral membrane protein</topology>
    </subcellularLocation>
    <subcellularLocation>
        <location evidence="2">Host cell membrane</location>
        <topology evidence="2">Peripheral membrane protein</topology>
        <orientation evidence="2">Cytoplasmic side</orientation>
    </subcellularLocation>
    <subcellularLocation>
        <location evidence="2">Host endomembrane system</location>
        <topology evidence="2">Peripheral membrane protein</topology>
    </subcellularLocation>
    <text evidence="2">In virion, localizes on the intravirional side of the membrane. In the host cell, it is found associated with virus-induced membrane proliferation foci and probably also in multivesicular bodies. These VP40-enriched membrane clusters are then redistributed to the plasma membrane where budding takes place.</text>
</comment>
<comment type="domain">
    <text evidence="3">Late-budding domains (L domains) are short sequence motifs essential for viral particle budding. They recruit proteins of the host ESCRT machinery (Endosomal Sorting Complex Required for Transport) or ESCRT-associated proteins. VP40 contains two overlapping L domains: a PTAP/PSAP motif, which interacts with the UEV domain of TSG101 and a PPXY motif which interacts with the WW domain 3 of NEDD4 E3 ubiquitin ligase and the three WW domains of SMURF2 E3 ubiquitin ligase.</text>
</comment>
<comment type="miscellaneous">
    <text evidence="1">Most abundant protein in the virion.</text>
</comment>
<comment type="similarity">
    <text evidence="4">Belongs to the filoviridae matrix protein VP40 family.</text>
</comment>
<gene>
    <name type="primary">VP40</name>
</gene>
<keyword id="KW-1032">Host cell membrane</keyword>
<keyword id="KW-1039">Host endosome</keyword>
<keyword id="KW-1043">Host membrane</keyword>
<keyword id="KW-0945">Host-virus interaction</keyword>
<keyword id="KW-1090">Inhibition of host innate immune response by virus</keyword>
<keyword id="KW-0472">Membrane</keyword>
<keyword id="KW-0687">Ribonucleoprotein</keyword>
<keyword id="KW-0694">RNA-binding</keyword>
<keyword id="KW-0941">Suppressor of RNA silencing</keyword>
<keyword id="KW-1198">Viral budding</keyword>
<keyword id="KW-1187">Viral budding via the host ESCRT complexes</keyword>
<keyword id="KW-0899">Viral immunoevasion</keyword>
<keyword id="KW-0468">Viral matrix protein</keyword>
<keyword id="KW-1188">Viral release from host cell</keyword>
<keyword id="KW-0693">Viral RNA replication</keyword>
<keyword id="KW-0946">Virion</keyword>
<accession>Q8JPX9</accession>
<accession>Q5UAK9</accession>
<protein>
    <recommendedName>
        <fullName>Matrix protein VP40</fullName>
    </recommendedName>
    <alternativeName>
        <fullName evidence="3">Ebola VP40</fullName>
        <shortName evidence="3">eVP40</shortName>
    </alternativeName>
    <alternativeName>
        <fullName>Membrane-associated protein VP40</fullName>
    </alternativeName>
</protein>
<feature type="chain" id="PRO_0000245081" description="Matrix protein VP40">
    <location>
        <begin position="1"/>
        <end position="331"/>
    </location>
</feature>
<feature type="region of interest" description="Important for oligomerization" evidence="1">
    <location>
        <begin position="212"/>
        <end position="214"/>
    </location>
</feature>
<feature type="region of interest" description="Membrane-binding" evidence="1">
    <location>
        <begin position="213"/>
        <end position="331"/>
    </location>
</feature>
<feature type="short sequence motif" description="PTAP/PSAP motif">
    <location>
        <begin position="7"/>
        <end position="10"/>
    </location>
</feature>
<feature type="short sequence motif" description="PPXY motif">
    <location>
        <begin position="10"/>
        <end position="13"/>
    </location>
</feature>
<feature type="sequence variant" description="In strain: Isolate Pennsylvania-89.">
    <original>L</original>
    <variation>F</variation>
    <location>
        <position position="147"/>
    </location>
</feature>
<feature type="sequence variant" description="In strain: Isolate Pennsylvania-89.">
    <original>NQ</original>
    <variation>KK</variation>
    <location>
        <begin position="154"/>
        <end position="155"/>
    </location>
</feature>
<feature type="sequence variant" description="In strain: Isolate Pennsylvania-89.">
    <original>QE</original>
    <variation>PG</variation>
    <location>
        <begin position="159"/>
        <end position="160"/>
    </location>
</feature>
<feature type="sequence variant" description="In strain: Isolate Pennsylvania-89.">
    <original>P</original>
    <variation>T</variation>
    <location>
        <position position="321"/>
    </location>
</feature>
<organism>
    <name type="scientific">Reston ebolavirus (strain Reston-89)</name>
    <name type="common">REBOV</name>
    <name type="synonym">Reston Ebola virus</name>
    <dbReference type="NCBI Taxonomy" id="386032"/>
    <lineage>
        <taxon>Viruses</taxon>
        <taxon>Riboviria</taxon>
        <taxon>Orthornavirae</taxon>
        <taxon>Negarnaviricota</taxon>
        <taxon>Haploviricotina</taxon>
        <taxon>Monjiviricetes</taxon>
        <taxon>Mononegavirales</taxon>
        <taxon>Filoviridae</taxon>
        <taxon>Orthoebolavirus</taxon>
        <taxon>Orthoebolavirus restonense</taxon>
        <taxon>Reston ebolavirus</taxon>
    </lineage>
</organism>
<evidence type="ECO:0000250" key="1"/>
<evidence type="ECO:0000250" key="2">
    <source>
        <dbReference type="UniProtKB" id="P35260"/>
    </source>
</evidence>
<evidence type="ECO:0000250" key="3">
    <source>
        <dbReference type="UniProtKB" id="Q05128"/>
    </source>
</evidence>
<evidence type="ECO:0000305" key="4"/>